<proteinExistence type="predicted"/>
<name>Y2124_ARCFU</name>
<keyword id="KW-1003">Cell membrane</keyword>
<keyword id="KW-0472">Membrane</keyword>
<keyword id="KW-1185">Reference proteome</keyword>
<keyword id="KW-0812">Transmembrane</keyword>
<keyword id="KW-1133">Transmembrane helix</keyword>
<feature type="chain" id="PRO_0000128096" description="Uncharacterized protein AF_2124">
    <location>
        <begin position="1"/>
        <end position="142"/>
    </location>
</feature>
<feature type="transmembrane region" description="Helical" evidence="1">
    <location>
        <begin position="75"/>
        <end position="97"/>
    </location>
</feature>
<feature type="transmembrane region" description="Helical" evidence="1">
    <location>
        <begin position="107"/>
        <end position="124"/>
    </location>
</feature>
<dbReference type="EMBL" id="AE000782">
    <property type="protein sequence ID" value="AAB89131.1"/>
    <property type="molecule type" value="Genomic_DNA"/>
</dbReference>
<dbReference type="PIR" id="D69515">
    <property type="entry name" value="D69515"/>
</dbReference>
<dbReference type="RefSeq" id="WP_010879615.1">
    <property type="nucleotide sequence ID" value="NC_000917.1"/>
</dbReference>
<dbReference type="STRING" id="224325.AF_2124"/>
<dbReference type="PaxDb" id="224325-AF_2124"/>
<dbReference type="EnsemblBacteria" id="AAB89131">
    <property type="protein sequence ID" value="AAB89131"/>
    <property type="gene ID" value="AF_2124"/>
</dbReference>
<dbReference type="KEGG" id="afu:AF_2124"/>
<dbReference type="eggNOG" id="arCOG12215">
    <property type="taxonomic scope" value="Archaea"/>
</dbReference>
<dbReference type="HOGENOM" id="CLU_1727146_0_0_2"/>
<dbReference type="OrthoDB" id="386317at2157"/>
<dbReference type="Proteomes" id="UP000002199">
    <property type="component" value="Chromosome"/>
</dbReference>
<dbReference type="GO" id="GO:0005886">
    <property type="term" value="C:plasma membrane"/>
    <property type="evidence" value="ECO:0007669"/>
    <property type="project" value="UniProtKB-SubCell"/>
</dbReference>
<protein>
    <recommendedName>
        <fullName>Uncharacterized protein AF_2124</fullName>
    </recommendedName>
</protein>
<sequence>MNYFLIFLTLLVAVIVEKIEELVAIRFFSSYVLDIARMEAEIEEYKELSMLAMLSGDREAYRGFQDMMNEIYGRVFFRKISFFTPLYFLLLSPYIVALQFLGVENSLSIVLPVAVLYFSAKLFYGMVRDFVKSYVDYRKANN</sequence>
<evidence type="ECO:0000255" key="1"/>
<evidence type="ECO:0000305" key="2"/>
<accession>O28156</accession>
<gene>
    <name type="ordered locus">AF_2124</name>
</gene>
<organism>
    <name type="scientific">Archaeoglobus fulgidus (strain ATCC 49558 / DSM 4304 / JCM 9628 / NBRC 100126 / VC-16)</name>
    <dbReference type="NCBI Taxonomy" id="224325"/>
    <lineage>
        <taxon>Archaea</taxon>
        <taxon>Methanobacteriati</taxon>
        <taxon>Methanobacteriota</taxon>
        <taxon>Archaeoglobi</taxon>
        <taxon>Archaeoglobales</taxon>
        <taxon>Archaeoglobaceae</taxon>
        <taxon>Archaeoglobus</taxon>
    </lineage>
</organism>
<reference key="1">
    <citation type="journal article" date="1997" name="Nature">
        <title>The complete genome sequence of the hyperthermophilic, sulphate-reducing archaeon Archaeoglobus fulgidus.</title>
        <authorList>
            <person name="Klenk H.-P."/>
            <person name="Clayton R.A."/>
            <person name="Tomb J.-F."/>
            <person name="White O."/>
            <person name="Nelson K.E."/>
            <person name="Ketchum K.A."/>
            <person name="Dodson R.J."/>
            <person name="Gwinn M.L."/>
            <person name="Hickey E.K."/>
            <person name="Peterson J.D."/>
            <person name="Richardson D.L."/>
            <person name="Kerlavage A.R."/>
            <person name="Graham D.E."/>
            <person name="Kyrpides N.C."/>
            <person name="Fleischmann R.D."/>
            <person name="Quackenbush J."/>
            <person name="Lee N.H."/>
            <person name="Sutton G.G."/>
            <person name="Gill S.R."/>
            <person name="Kirkness E.F."/>
            <person name="Dougherty B.A."/>
            <person name="McKenney K."/>
            <person name="Adams M.D."/>
            <person name="Loftus B.J."/>
            <person name="Peterson S.N."/>
            <person name="Reich C.I."/>
            <person name="McNeil L.K."/>
            <person name="Badger J.H."/>
            <person name="Glodek A."/>
            <person name="Zhou L."/>
            <person name="Overbeek R."/>
            <person name="Gocayne J.D."/>
            <person name="Weidman J.F."/>
            <person name="McDonald L.A."/>
            <person name="Utterback T.R."/>
            <person name="Cotton M.D."/>
            <person name="Spriggs T."/>
            <person name="Artiach P."/>
            <person name="Kaine B.P."/>
            <person name="Sykes S.M."/>
            <person name="Sadow P.W."/>
            <person name="D'Andrea K.P."/>
            <person name="Bowman C."/>
            <person name="Fujii C."/>
            <person name="Garland S.A."/>
            <person name="Mason T.M."/>
            <person name="Olsen G.J."/>
            <person name="Fraser C.M."/>
            <person name="Smith H.O."/>
            <person name="Woese C.R."/>
            <person name="Venter J.C."/>
        </authorList>
    </citation>
    <scope>NUCLEOTIDE SEQUENCE [LARGE SCALE GENOMIC DNA]</scope>
    <source>
        <strain>ATCC 49558 / DSM 4304 / JCM 9628 / NBRC 100126 / VC-16</strain>
    </source>
</reference>
<comment type="subcellular location">
    <subcellularLocation>
        <location evidence="2">Cell membrane</location>
        <topology evidence="2">Multi-pass membrane protein</topology>
    </subcellularLocation>
</comment>